<name>CLPP1_LEIXX</name>
<sequence>MADMGIQPSVFDRLLKDRIIWLGSEVRDENANEIAAKLLLLAAEDSKRDIYLYINSPGGSITAGMAIYDTMQFVPNDIVTVGIGMAASMGQLLLTAGTKGKRYITPNARVLLHQPHGGFGGTASDIRTQAQLILHMKKRLAEITSEATGKTVDQVNADGDRDRWFTAQEALDYGFVDHIRESALLVAGGGGTAPAGK</sequence>
<proteinExistence type="inferred from homology"/>
<comment type="function">
    <text evidence="1">Cleaves peptides in various proteins in a process that requires ATP hydrolysis. Has a chymotrypsin-like activity. Plays a major role in the degradation of misfolded proteins.</text>
</comment>
<comment type="catalytic activity">
    <reaction evidence="1">
        <text>Hydrolysis of proteins to small peptides in the presence of ATP and magnesium. alpha-casein is the usual test substrate. In the absence of ATP, only oligopeptides shorter than five residues are hydrolyzed (such as succinyl-Leu-Tyr-|-NHMec, and Leu-Tyr-Leu-|-Tyr-Trp, in which cleavage of the -Tyr-|-Leu- and -Tyr-|-Trp bonds also occurs).</text>
        <dbReference type="EC" id="3.4.21.92"/>
    </reaction>
</comment>
<comment type="subunit">
    <text evidence="1">Fourteen ClpP subunits assemble into 2 heptameric rings which stack back to back to give a disk-like structure with a central cavity, resembling the structure of eukaryotic proteasomes.</text>
</comment>
<comment type="subcellular location">
    <subcellularLocation>
        <location evidence="1">Cytoplasm</location>
    </subcellularLocation>
</comment>
<comment type="similarity">
    <text evidence="1">Belongs to the peptidase S14 family.</text>
</comment>
<protein>
    <recommendedName>
        <fullName evidence="1">ATP-dependent Clp protease proteolytic subunit 1</fullName>
        <ecNumber evidence="1">3.4.21.92</ecNumber>
    </recommendedName>
    <alternativeName>
        <fullName evidence="1">Endopeptidase Clp 1</fullName>
    </alternativeName>
</protein>
<keyword id="KW-0963">Cytoplasm</keyword>
<keyword id="KW-0378">Hydrolase</keyword>
<keyword id="KW-0645">Protease</keyword>
<keyword id="KW-1185">Reference proteome</keyword>
<keyword id="KW-0720">Serine protease</keyword>
<reference key="1">
    <citation type="journal article" date="2004" name="Mol. Plant Microbe Interact.">
        <title>The genome sequence of the Gram-positive sugarcane pathogen Leifsonia xyli subsp. xyli.</title>
        <authorList>
            <person name="Monteiro-Vitorello C.B."/>
            <person name="Camargo L.E.A."/>
            <person name="Van Sluys M.A."/>
            <person name="Kitajima J.P."/>
            <person name="Truffi D."/>
            <person name="do Amaral A.M."/>
            <person name="Harakava R."/>
            <person name="de Oliveira J.C.F."/>
            <person name="Wood D."/>
            <person name="de Oliveira M.C."/>
            <person name="Miyaki C.Y."/>
            <person name="Takita M.A."/>
            <person name="da Silva A.C.R."/>
            <person name="Furlan L.R."/>
            <person name="Carraro D.M."/>
            <person name="Camarotte G."/>
            <person name="Almeida N.F. Jr."/>
            <person name="Carrer H."/>
            <person name="Coutinho L.L."/>
            <person name="El-Dorry H.A."/>
            <person name="Ferro M.I.T."/>
            <person name="Gagliardi P.R."/>
            <person name="Giglioti E."/>
            <person name="Goldman M.H.S."/>
            <person name="Goldman G.H."/>
            <person name="Kimura E.T."/>
            <person name="Ferro E.S."/>
            <person name="Kuramae E.E."/>
            <person name="Lemos E.G.M."/>
            <person name="Lemos M.V.F."/>
            <person name="Mauro S.M.Z."/>
            <person name="Machado M.A."/>
            <person name="Marino C.L."/>
            <person name="Menck C.F."/>
            <person name="Nunes L.R."/>
            <person name="Oliveira R.C."/>
            <person name="Pereira G.G."/>
            <person name="Siqueira W."/>
            <person name="de Souza A.A."/>
            <person name="Tsai S.M."/>
            <person name="Zanca A.S."/>
            <person name="Simpson A.J.G."/>
            <person name="Brumbley S.M."/>
            <person name="Setubal J.C."/>
        </authorList>
    </citation>
    <scope>NUCLEOTIDE SEQUENCE [LARGE SCALE GENOMIC DNA]</scope>
    <source>
        <strain>CTCB07</strain>
    </source>
</reference>
<dbReference type="EC" id="3.4.21.92" evidence="1"/>
<dbReference type="EMBL" id="AE016822">
    <property type="protein sequence ID" value="AAT88697.1"/>
    <property type="molecule type" value="Genomic_DNA"/>
</dbReference>
<dbReference type="RefSeq" id="WP_011185695.1">
    <property type="nucleotide sequence ID" value="NC_006087.1"/>
</dbReference>
<dbReference type="SMR" id="Q6AFZ8"/>
<dbReference type="STRING" id="281090.Lxx07850"/>
<dbReference type="MEROPS" id="S14.008"/>
<dbReference type="KEGG" id="lxx:Lxx07850"/>
<dbReference type="eggNOG" id="COG0740">
    <property type="taxonomic scope" value="Bacteria"/>
</dbReference>
<dbReference type="HOGENOM" id="CLU_058707_3_2_11"/>
<dbReference type="Proteomes" id="UP000001306">
    <property type="component" value="Chromosome"/>
</dbReference>
<dbReference type="GO" id="GO:0005737">
    <property type="term" value="C:cytoplasm"/>
    <property type="evidence" value="ECO:0007669"/>
    <property type="project" value="UniProtKB-SubCell"/>
</dbReference>
<dbReference type="GO" id="GO:0009368">
    <property type="term" value="C:endopeptidase Clp complex"/>
    <property type="evidence" value="ECO:0007669"/>
    <property type="project" value="TreeGrafter"/>
</dbReference>
<dbReference type="GO" id="GO:0004176">
    <property type="term" value="F:ATP-dependent peptidase activity"/>
    <property type="evidence" value="ECO:0007669"/>
    <property type="project" value="InterPro"/>
</dbReference>
<dbReference type="GO" id="GO:0051117">
    <property type="term" value="F:ATPase binding"/>
    <property type="evidence" value="ECO:0007669"/>
    <property type="project" value="TreeGrafter"/>
</dbReference>
<dbReference type="GO" id="GO:0004252">
    <property type="term" value="F:serine-type endopeptidase activity"/>
    <property type="evidence" value="ECO:0007669"/>
    <property type="project" value="UniProtKB-UniRule"/>
</dbReference>
<dbReference type="GO" id="GO:0006515">
    <property type="term" value="P:protein quality control for misfolded or incompletely synthesized proteins"/>
    <property type="evidence" value="ECO:0007669"/>
    <property type="project" value="TreeGrafter"/>
</dbReference>
<dbReference type="CDD" id="cd07017">
    <property type="entry name" value="S14_ClpP_2"/>
    <property type="match status" value="1"/>
</dbReference>
<dbReference type="FunFam" id="3.90.226.10:FF:000002">
    <property type="entry name" value="ATP-dependent Clp protease proteolytic subunit"/>
    <property type="match status" value="1"/>
</dbReference>
<dbReference type="Gene3D" id="3.90.226.10">
    <property type="entry name" value="2-enoyl-CoA Hydratase, Chain A, domain 1"/>
    <property type="match status" value="1"/>
</dbReference>
<dbReference type="HAMAP" id="MF_00444">
    <property type="entry name" value="ClpP"/>
    <property type="match status" value="1"/>
</dbReference>
<dbReference type="InterPro" id="IPR001907">
    <property type="entry name" value="ClpP"/>
</dbReference>
<dbReference type="InterPro" id="IPR029045">
    <property type="entry name" value="ClpP/crotonase-like_dom_sf"/>
</dbReference>
<dbReference type="InterPro" id="IPR023562">
    <property type="entry name" value="ClpP/TepA"/>
</dbReference>
<dbReference type="InterPro" id="IPR033135">
    <property type="entry name" value="ClpP_His_AS"/>
</dbReference>
<dbReference type="NCBIfam" id="NF001368">
    <property type="entry name" value="PRK00277.1"/>
    <property type="match status" value="1"/>
</dbReference>
<dbReference type="NCBIfam" id="NF009205">
    <property type="entry name" value="PRK12553.1"/>
    <property type="match status" value="1"/>
</dbReference>
<dbReference type="PANTHER" id="PTHR10381">
    <property type="entry name" value="ATP-DEPENDENT CLP PROTEASE PROTEOLYTIC SUBUNIT"/>
    <property type="match status" value="1"/>
</dbReference>
<dbReference type="PANTHER" id="PTHR10381:SF70">
    <property type="entry name" value="ATP-DEPENDENT CLP PROTEASE PROTEOLYTIC SUBUNIT"/>
    <property type="match status" value="1"/>
</dbReference>
<dbReference type="Pfam" id="PF00574">
    <property type="entry name" value="CLP_protease"/>
    <property type="match status" value="1"/>
</dbReference>
<dbReference type="PRINTS" id="PR00127">
    <property type="entry name" value="CLPPROTEASEP"/>
</dbReference>
<dbReference type="SUPFAM" id="SSF52096">
    <property type="entry name" value="ClpP/crotonase"/>
    <property type="match status" value="1"/>
</dbReference>
<dbReference type="PROSITE" id="PS00382">
    <property type="entry name" value="CLP_PROTEASE_HIS"/>
    <property type="match status" value="1"/>
</dbReference>
<accession>Q6AFZ8</accession>
<gene>
    <name evidence="1" type="primary">clpP1</name>
    <name type="ordered locus">Lxx07850</name>
</gene>
<evidence type="ECO:0000255" key="1">
    <source>
        <dbReference type="HAMAP-Rule" id="MF_00444"/>
    </source>
</evidence>
<feature type="chain" id="PRO_0000179579" description="ATP-dependent Clp protease proteolytic subunit 1">
    <location>
        <begin position="1"/>
        <end position="197"/>
    </location>
</feature>
<feature type="active site" description="Nucleophile" evidence="1">
    <location>
        <position position="88"/>
    </location>
</feature>
<feature type="active site" evidence="1">
    <location>
        <position position="113"/>
    </location>
</feature>
<organism>
    <name type="scientific">Leifsonia xyli subsp. xyli (strain CTCB07)</name>
    <dbReference type="NCBI Taxonomy" id="281090"/>
    <lineage>
        <taxon>Bacteria</taxon>
        <taxon>Bacillati</taxon>
        <taxon>Actinomycetota</taxon>
        <taxon>Actinomycetes</taxon>
        <taxon>Micrococcales</taxon>
        <taxon>Microbacteriaceae</taxon>
        <taxon>Leifsonia</taxon>
    </lineage>
</organism>